<keyword id="KW-0010">Activator</keyword>
<keyword id="KW-0238">DNA-binding</keyword>
<keyword id="KW-0312">Gluconeogenesis</keyword>
<keyword id="KW-0479">Metal-binding</keyword>
<keyword id="KW-0539">Nucleus</keyword>
<keyword id="KW-1185">Reference proteome</keyword>
<keyword id="KW-0804">Transcription</keyword>
<keyword id="KW-0805">Transcription regulation</keyword>
<keyword id="KW-0862">Zinc</keyword>
<dbReference type="EMBL" id="GL377308">
    <property type="protein sequence ID" value="EFI95523.1"/>
    <property type="molecule type" value="Genomic_DNA"/>
</dbReference>
<dbReference type="RefSeq" id="XP_003030426.1">
    <property type="nucleotide sequence ID" value="XM_003030380.1"/>
</dbReference>
<dbReference type="SMR" id="D8Q8R5"/>
<dbReference type="GeneID" id="9591431"/>
<dbReference type="KEGG" id="scm:SCHCO_02632672"/>
<dbReference type="VEuPathDB" id="FungiDB:SCHCODRAFT_02632672"/>
<dbReference type="eggNOG" id="ENOG502R1M5">
    <property type="taxonomic scope" value="Eukaryota"/>
</dbReference>
<dbReference type="HOGENOM" id="CLU_010748_1_0_1"/>
<dbReference type="InParanoid" id="D8Q8R5"/>
<dbReference type="OMA" id="VMTTCKL"/>
<dbReference type="OrthoDB" id="2538135at2759"/>
<dbReference type="Proteomes" id="UP000007431">
    <property type="component" value="Unassembled WGS sequence"/>
</dbReference>
<dbReference type="GO" id="GO:0005634">
    <property type="term" value="C:nucleus"/>
    <property type="evidence" value="ECO:0007669"/>
    <property type="project" value="UniProtKB-SubCell"/>
</dbReference>
<dbReference type="GO" id="GO:0000981">
    <property type="term" value="F:DNA-binding transcription factor activity, RNA polymerase II-specific"/>
    <property type="evidence" value="ECO:0007669"/>
    <property type="project" value="InterPro"/>
</dbReference>
<dbReference type="GO" id="GO:0000977">
    <property type="term" value="F:RNA polymerase II transcription regulatory region sequence-specific DNA binding"/>
    <property type="evidence" value="ECO:0007669"/>
    <property type="project" value="TreeGrafter"/>
</dbReference>
<dbReference type="GO" id="GO:0008270">
    <property type="term" value="F:zinc ion binding"/>
    <property type="evidence" value="ECO:0007669"/>
    <property type="project" value="InterPro"/>
</dbReference>
<dbReference type="GO" id="GO:0009267">
    <property type="term" value="P:cellular response to starvation"/>
    <property type="evidence" value="ECO:0007669"/>
    <property type="project" value="TreeGrafter"/>
</dbReference>
<dbReference type="GO" id="GO:0006094">
    <property type="term" value="P:gluconeogenesis"/>
    <property type="evidence" value="ECO:0007669"/>
    <property type="project" value="UniProtKB-KW"/>
</dbReference>
<dbReference type="CDD" id="cd00067">
    <property type="entry name" value="GAL4"/>
    <property type="match status" value="1"/>
</dbReference>
<dbReference type="Gene3D" id="4.10.240.10">
    <property type="entry name" value="Zn(2)-C6 fungal-type DNA-binding domain"/>
    <property type="match status" value="1"/>
</dbReference>
<dbReference type="InterPro" id="IPR050335">
    <property type="entry name" value="ERT1_acuK_gluconeogen_tf"/>
</dbReference>
<dbReference type="InterPro" id="IPR035965">
    <property type="entry name" value="PAS-like_dom_sf"/>
</dbReference>
<dbReference type="InterPro" id="IPR056751">
    <property type="entry name" value="PAS_13"/>
</dbReference>
<dbReference type="InterPro" id="IPR036864">
    <property type="entry name" value="Zn2-C6_fun-type_DNA-bd_sf"/>
</dbReference>
<dbReference type="InterPro" id="IPR001138">
    <property type="entry name" value="Zn2Cys6_DnaBD"/>
</dbReference>
<dbReference type="PANTHER" id="PTHR47659:SF1">
    <property type="entry name" value="TRANSCRIPTION ACTIVATOR OF GLUCONEOGENESIS ERT1"/>
    <property type="match status" value="1"/>
</dbReference>
<dbReference type="PANTHER" id="PTHR47659">
    <property type="entry name" value="ZN(II)2CYS6 TRANSCRIPTION FACTOR (EUROFUNG)-RELATED"/>
    <property type="match status" value="1"/>
</dbReference>
<dbReference type="Pfam" id="PF24990">
    <property type="entry name" value="PAS_13"/>
    <property type="match status" value="1"/>
</dbReference>
<dbReference type="SMART" id="SM00066">
    <property type="entry name" value="GAL4"/>
    <property type="match status" value="1"/>
</dbReference>
<dbReference type="SUPFAM" id="SSF55785">
    <property type="entry name" value="PYP-like sensor domain (PAS domain)"/>
    <property type="match status" value="1"/>
</dbReference>
<dbReference type="SUPFAM" id="SSF57701">
    <property type="entry name" value="Zn2/Cys6 DNA-binding domain"/>
    <property type="match status" value="1"/>
</dbReference>
<dbReference type="PROSITE" id="PS50048">
    <property type="entry name" value="ZN2_CY6_FUNGAL_2"/>
    <property type="match status" value="1"/>
</dbReference>
<name>ERT1_SCHCM</name>
<evidence type="ECO:0000250" key="1"/>
<evidence type="ECO:0000255" key="2">
    <source>
        <dbReference type="PROSITE-ProRule" id="PRU00227"/>
    </source>
</evidence>
<evidence type="ECO:0000256" key="3">
    <source>
        <dbReference type="SAM" id="MobiDB-lite"/>
    </source>
</evidence>
<evidence type="ECO:0000305" key="4"/>
<gene>
    <name type="primary">ERT1</name>
    <name type="ORF">SCHCODRAFT_257622</name>
</gene>
<sequence length="560" mass="61867">MSTVHVVAPVAVHSVPPAQLLPQTATPPAYAQTLGGEAASTLAQKKKSPPLSANKRKRSETADDSTDQESNTPSRKSRDGPKKKKANRACFHCQKAHLTCDDSRPCQRCIKRGIANNCTEGHRKKAKYLLDDEELEELKRKQNTVPSRKSEPRTEKPKPSEPPAQTAQAPAAPLPRPSLQAQAQPVPISAPAPIPASTSEPFAPNDPMFNLTFDSNFPFGSEAANLEYTILSAILGNPSPPDTTSPPPQPYPWPSDTLSFNSPQLDSFSSFPENVLPVISADNLLSSTGSLNYLQARTAKQQSTADPADLQCGDDASKYTRDGRCSSPPSFYMDKESAARTLLSPPPTDSPGSATSTVPLNEVAPFPRPGSHLQSITDRVKAPYDYTEGYHFLMKHLTTRFEKNDILRVVRALAIFRPSLIALQMPLSWDDEVFVERCFQRSLLELDKLISYSGTPTVVWRRTGEICLVAPEFCMLTEWSMEELMGQKKYIYELFENQSVVEYWENFAEHAFENTTQSVYSHCVLLKPSGAPVPATFCFSIRRDLFDLPSAVIGQWLPLL</sequence>
<comment type="function">
    <text evidence="1">Transcription factor which regulates nonfermentable carbon utilization. Activator of gluconeogenetic genes (By similarity).</text>
</comment>
<comment type="subcellular location">
    <subcellularLocation>
        <location evidence="2">Nucleus</location>
    </subcellularLocation>
</comment>
<comment type="similarity">
    <text evidence="4">Belongs to the ERT1/acuK family.</text>
</comment>
<organism>
    <name type="scientific">Schizophyllum commune (strain H4-8 / FGSC 9210)</name>
    <name type="common">Split gill fungus</name>
    <dbReference type="NCBI Taxonomy" id="578458"/>
    <lineage>
        <taxon>Eukaryota</taxon>
        <taxon>Fungi</taxon>
        <taxon>Dikarya</taxon>
        <taxon>Basidiomycota</taxon>
        <taxon>Agaricomycotina</taxon>
        <taxon>Agaricomycetes</taxon>
        <taxon>Agaricomycetidae</taxon>
        <taxon>Agaricales</taxon>
        <taxon>Schizophyllaceae</taxon>
        <taxon>Schizophyllum</taxon>
    </lineage>
</organism>
<proteinExistence type="inferred from homology"/>
<feature type="chain" id="PRO_0000406469" description="Transcription activator of gluconeogenesis ERT1">
    <location>
        <begin position="1"/>
        <end position="560"/>
    </location>
</feature>
<feature type="domain" description="PAS">
    <location>
        <begin position="442"/>
        <end position="515"/>
    </location>
</feature>
<feature type="DNA-binding region" description="Zn(2)-C6 fungal-type" evidence="2">
    <location>
        <begin position="90"/>
        <end position="118"/>
    </location>
</feature>
<feature type="region of interest" description="Disordered" evidence="3">
    <location>
        <begin position="28"/>
        <end position="88"/>
    </location>
</feature>
<feature type="region of interest" description="Disordered" evidence="3">
    <location>
        <begin position="139"/>
        <end position="205"/>
    </location>
</feature>
<feature type="region of interest" description="Disordered" evidence="3">
    <location>
        <begin position="301"/>
        <end position="331"/>
    </location>
</feature>
<feature type="region of interest" description="Disordered" evidence="3">
    <location>
        <begin position="339"/>
        <end position="358"/>
    </location>
</feature>
<feature type="compositionally biased region" description="Basic residues" evidence="3">
    <location>
        <begin position="44"/>
        <end position="58"/>
    </location>
</feature>
<feature type="compositionally biased region" description="Basic and acidic residues" evidence="3">
    <location>
        <begin position="148"/>
        <end position="159"/>
    </location>
</feature>
<feature type="compositionally biased region" description="Low complexity" evidence="3">
    <location>
        <begin position="163"/>
        <end position="187"/>
    </location>
</feature>
<feature type="compositionally biased region" description="Basic and acidic residues" evidence="3">
    <location>
        <begin position="315"/>
        <end position="324"/>
    </location>
</feature>
<protein>
    <recommendedName>
        <fullName>Transcription activator of gluconeogenesis ERT1</fullName>
    </recommendedName>
</protein>
<reference key="1">
    <citation type="journal article" date="2010" name="Nat. Biotechnol.">
        <title>Genome sequence of the model mushroom Schizophyllum commune.</title>
        <authorList>
            <person name="Ohm R.A."/>
            <person name="de Jong J.F."/>
            <person name="Lugones L.G."/>
            <person name="Aerts A."/>
            <person name="Kothe E."/>
            <person name="Stajich J.E."/>
            <person name="de Vries R.P."/>
            <person name="Record E."/>
            <person name="Levasseur A."/>
            <person name="Baker S.E."/>
            <person name="Bartholomew K.A."/>
            <person name="Coutinho P.M."/>
            <person name="Erdmann S."/>
            <person name="Fowler T.J."/>
            <person name="Gathman A.C."/>
            <person name="Lombard V."/>
            <person name="Henrissat B."/>
            <person name="Knabe N."/>
            <person name="Kuees U."/>
            <person name="Lilly W.W."/>
            <person name="Lindquist E."/>
            <person name="Lucas S."/>
            <person name="Magnuson J.K."/>
            <person name="Piumi F."/>
            <person name="Raudaskoski M."/>
            <person name="Salamov A."/>
            <person name="Schmutz J."/>
            <person name="Schwarze F.W.M.R."/>
            <person name="vanKuyk P.A."/>
            <person name="Horton J.S."/>
            <person name="Grigoriev I.V."/>
            <person name="Woesten H.A.B."/>
        </authorList>
    </citation>
    <scope>NUCLEOTIDE SEQUENCE [LARGE SCALE GENOMIC DNA]</scope>
    <source>
        <strain>H4-8 / FGSC 9210</strain>
    </source>
</reference>
<accession>D8Q8R5</accession>